<organism>
    <name type="scientific">Schizosaccharomyces pombe (strain 972 / ATCC 24843)</name>
    <name type="common">Fission yeast</name>
    <dbReference type="NCBI Taxonomy" id="284812"/>
    <lineage>
        <taxon>Eukaryota</taxon>
        <taxon>Fungi</taxon>
        <taxon>Dikarya</taxon>
        <taxon>Ascomycota</taxon>
        <taxon>Taphrinomycotina</taxon>
        <taxon>Schizosaccharomycetes</taxon>
        <taxon>Schizosaccharomycetales</taxon>
        <taxon>Schizosaccharomycetaceae</taxon>
        <taxon>Schizosaccharomyces</taxon>
    </lineage>
</organism>
<reference key="1">
    <citation type="journal article" date="2002" name="Nature">
        <title>The genome sequence of Schizosaccharomyces pombe.</title>
        <authorList>
            <person name="Wood V."/>
            <person name="Gwilliam R."/>
            <person name="Rajandream M.A."/>
            <person name="Lyne M.H."/>
            <person name="Lyne R."/>
            <person name="Stewart A."/>
            <person name="Sgouros J.G."/>
            <person name="Peat N."/>
            <person name="Hayles J."/>
            <person name="Baker S.G."/>
            <person name="Basham D."/>
            <person name="Bowman S."/>
            <person name="Brooks K."/>
            <person name="Brown D."/>
            <person name="Brown S."/>
            <person name="Chillingworth T."/>
            <person name="Churcher C.M."/>
            <person name="Collins M."/>
            <person name="Connor R."/>
            <person name="Cronin A."/>
            <person name="Davis P."/>
            <person name="Feltwell T."/>
            <person name="Fraser A."/>
            <person name="Gentles S."/>
            <person name="Goble A."/>
            <person name="Hamlin N."/>
            <person name="Harris D.E."/>
            <person name="Hidalgo J."/>
            <person name="Hodgson G."/>
            <person name="Holroyd S."/>
            <person name="Hornsby T."/>
            <person name="Howarth S."/>
            <person name="Huckle E.J."/>
            <person name="Hunt S."/>
            <person name="Jagels K."/>
            <person name="James K.D."/>
            <person name="Jones L."/>
            <person name="Jones M."/>
            <person name="Leather S."/>
            <person name="McDonald S."/>
            <person name="McLean J."/>
            <person name="Mooney P."/>
            <person name="Moule S."/>
            <person name="Mungall K.L."/>
            <person name="Murphy L.D."/>
            <person name="Niblett D."/>
            <person name="Odell C."/>
            <person name="Oliver K."/>
            <person name="O'Neil S."/>
            <person name="Pearson D."/>
            <person name="Quail M.A."/>
            <person name="Rabbinowitsch E."/>
            <person name="Rutherford K.M."/>
            <person name="Rutter S."/>
            <person name="Saunders D."/>
            <person name="Seeger K."/>
            <person name="Sharp S."/>
            <person name="Skelton J."/>
            <person name="Simmonds M.N."/>
            <person name="Squares R."/>
            <person name="Squares S."/>
            <person name="Stevens K."/>
            <person name="Taylor K."/>
            <person name="Taylor R.G."/>
            <person name="Tivey A."/>
            <person name="Walsh S.V."/>
            <person name="Warren T."/>
            <person name="Whitehead S."/>
            <person name="Woodward J.R."/>
            <person name="Volckaert G."/>
            <person name="Aert R."/>
            <person name="Robben J."/>
            <person name="Grymonprez B."/>
            <person name="Weltjens I."/>
            <person name="Vanstreels E."/>
            <person name="Rieger M."/>
            <person name="Schaefer M."/>
            <person name="Mueller-Auer S."/>
            <person name="Gabel C."/>
            <person name="Fuchs M."/>
            <person name="Duesterhoeft A."/>
            <person name="Fritzc C."/>
            <person name="Holzer E."/>
            <person name="Moestl D."/>
            <person name="Hilbert H."/>
            <person name="Borzym K."/>
            <person name="Langer I."/>
            <person name="Beck A."/>
            <person name="Lehrach H."/>
            <person name="Reinhardt R."/>
            <person name="Pohl T.M."/>
            <person name="Eger P."/>
            <person name="Zimmermann W."/>
            <person name="Wedler H."/>
            <person name="Wambutt R."/>
            <person name="Purnelle B."/>
            <person name="Goffeau A."/>
            <person name="Cadieu E."/>
            <person name="Dreano S."/>
            <person name="Gloux S."/>
            <person name="Lelaure V."/>
            <person name="Mottier S."/>
            <person name="Galibert F."/>
            <person name="Aves S.J."/>
            <person name="Xiang Z."/>
            <person name="Hunt C."/>
            <person name="Moore K."/>
            <person name="Hurst S.M."/>
            <person name="Lucas M."/>
            <person name="Rochet M."/>
            <person name="Gaillardin C."/>
            <person name="Tallada V.A."/>
            <person name="Garzon A."/>
            <person name="Thode G."/>
            <person name="Daga R.R."/>
            <person name="Cruzado L."/>
            <person name="Jimenez J."/>
            <person name="Sanchez M."/>
            <person name="del Rey F."/>
            <person name="Benito J."/>
            <person name="Dominguez A."/>
            <person name="Revuelta J.L."/>
            <person name="Moreno S."/>
            <person name="Armstrong J."/>
            <person name="Forsburg S.L."/>
            <person name="Cerutti L."/>
            <person name="Lowe T."/>
            <person name="McCombie W.R."/>
            <person name="Paulsen I."/>
            <person name="Potashkin J."/>
            <person name="Shpakovski G.V."/>
            <person name="Ussery D."/>
            <person name="Barrell B.G."/>
            <person name="Nurse P."/>
        </authorList>
    </citation>
    <scope>NUCLEOTIDE SEQUENCE [LARGE SCALE GENOMIC DNA]</scope>
    <source>
        <strain>972 / ATCC 24843</strain>
    </source>
</reference>
<reference key="2">
    <citation type="journal article" date="2020" name="PLoS Genet.">
        <title>Dramatically diverse Schizosaccharomyces pombe wtf meiotic drivers all display high gamete-killing efficiency.</title>
        <authorList>
            <person name="Bravo Nunez M.A."/>
            <person name="Sabbarini I.M."/>
            <person name="Eickbush M.T."/>
            <person name="Liang Y."/>
            <person name="Lange J.J."/>
            <person name="Kent A.M."/>
            <person name="Zanders S.E."/>
        </authorList>
    </citation>
    <scope>DEVELOPMENTAL STAGE</scope>
</reference>
<feature type="chain" id="PRO_0000193232" description="Meiotic drive suppressor wtf20">
    <location>
        <begin position="1"/>
        <end position="258"/>
    </location>
</feature>
<feature type="transmembrane region" description="Helical" evidence="4">
    <location>
        <begin position="84"/>
        <end position="106"/>
    </location>
</feature>
<feature type="transmembrane region" description="Helical" evidence="4">
    <location>
        <begin position="121"/>
        <end position="140"/>
    </location>
</feature>
<feature type="transmembrane region" description="Helical" evidence="4">
    <location>
        <begin position="196"/>
        <end position="216"/>
    </location>
</feature>
<feature type="region of interest" description="Disordered" evidence="5">
    <location>
        <begin position="1"/>
        <end position="71"/>
    </location>
</feature>
<feature type="compositionally biased region" description="Basic and acidic residues" evidence="5">
    <location>
        <begin position="19"/>
        <end position="30"/>
    </location>
</feature>
<sequence>MKNNYTSLKSPLDEEDELKTDHEIDLEKGLLPEYNSEEEGALPPYSDISKLANPVPEDSSTGPTEIANPNVERRQEFKDSHPNIYFLLRLLISVLAVSVVFFTAWVCVNPLEKSIFGKVAFSVTIGITCPILFIAIFYFYETWTKACGKGIKHFLKKWRNMFFTFCKSPIFCLVLLKAENKLSSHLGDQQWGWKCSASAFTFMAVSSILIFIAETVEPGSCSTDLVKRVQAYCDYEARQYASSNTAIPLREMNPENEA</sequence>
<accession>O74487</accession>
<evidence type="ECO:0000250" key="1">
    <source>
        <dbReference type="UniProtKB" id="A0A218N034"/>
    </source>
</evidence>
<evidence type="ECO:0000250" key="2">
    <source>
        <dbReference type="UniProtKB" id="A0A482ATU4"/>
    </source>
</evidence>
<evidence type="ECO:0000250" key="3">
    <source>
        <dbReference type="UniProtKB" id="O74420"/>
    </source>
</evidence>
<evidence type="ECO:0000255" key="4"/>
<evidence type="ECO:0000256" key="5">
    <source>
        <dbReference type="SAM" id="MobiDB-lite"/>
    </source>
</evidence>
<evidence type="ECO:0000269" key="6">
    <source>
    </source>
</evidence>
<evidence type="ECO:0000305" key="7"/>
<evidence type="ECO:0000312" key="8">
    <source>
        <dbReference type="PomBase" id="SPCC1906.04"/>
    </source>
</evidence>
<protein>
    <recommendedName>
        <fullName evidence="8">Meiotic drive suppressor wtf20</fullName>
    </recommendedName>
</protein>
<keyword id="KW-0472">Membrane</keyword>
<keyword id="KW-1185">Reference proteome</keyword>
<keyword id="KW-0812">Transmembrane</keyword>
<keyword id="KW-1133">Transmembrane helix</keyword>
<keyword id="KW-0926">Vacuole</keyword>
<proteinExistence type="evidence at protein level"/>
<dbReference type="EMBL" id="CU329672">
    <property type="protein sequence ID" value="CAA20773.1"/>
    <property type="molecule type" value="Genomic_DNA"/>
</dbReference>
<dbReference type="PIR" id="T41212">
    <property type="entry name" value="T41212"/>
</dbReference>
<dbReference type="RefSeq" id="NP_588408.1">
    <property type="nucleotide sequence ID" value="NM_001023399.2"/>
</dbReference>
<dbReference type="BioGRID" id="275906">
    <property type="interactions" value="6"/>
</dbReference>
<dbReference type="STRING" id="284812.O74487"/>
<dbReference type="PaxDb" id="4896-SPCC1906.04.1"/>
<dbReference type="EnsemblFungi" id="SPCC1906.04.1">
    <property type="protein sequence ID" value="SPCC1906.04.1:pep"/>
    <property type="gene ID" value="SPCC1906.04"/>
</dbReference>
<dbReference type="GeneID" id="2539340"/>
<dbReference type="KEGG" id="spo:2539340"/>
<dbReference type="PomBase" id="SPCC1906.04">
    <property type="gene designation" value="wtf20"/>
</dbReference>
<dbReference type="VEuPathDB" id="FungiDB:SPCC1906.04"/>
<dbReference type="HOGENOM" id="CLU_092895_0_0_1"/>
<dbReference type="InParanoid" id="O74487"/>
<dbReference type="PhylomeDB" id="O74487"/>
<dbReference type="PRO" id="PR:O74487"/>
<dbReference type="Proteomes" id="UP000002485">
    <property type="component" value="Chromosome III"/>
</dbReference>
<dbReference type="GO" id="GO:0005737">
    <property type="term" value="C:cytoplasm"/>
    <property type="evidence" value="ECO:0000250"/>
    <property type="project" value="PomBase"/>
</dbReference>
<dbReference type="GO" id="GO:0005774">
    <property type="term" value="C:vacuolar membrane"/>
    <property type="evidence" value="ECO:0007669"/>
    <property type="project" value="UniProtKB-SubCell"/>
</dbReference>
<dbReference type="GO" id="GO:0110134">
    <property type="term" value="P:meiotic drive"/>
    <property type="evidence" value="ECO:0000255"/>
    <property type="project" value="PomBase"/>
</dbReference>
<dbReference type="InterPro" id="IPR004982">
    <property type="entry name" value="WTF"/>
</dbReference>
<dbReference type="Pfam" id="PF03303">
    <property type="entry name" value="WTF"/>
    <property type="match status" value="1"/>
</dbReference>
<name>WTF20_SCHPO</name>
<gene>
    <name evidence="8" type="primary">wtf20</name>
    <name type="synonym">wtf6</name>
    <name evidence="8" type="ORF">SPCC1906.04</name>
</gene>
<comment type="function">
    <text evidence="1 2">Acts as a suppressor component of the dual wtf meiotic drive system, and can suppress but not confer meiotic drive by compatible poisons (By similarity). Wtf meiotic drive systems promote unequal transmission of alleles from the parental zygote to progeny spores by encoding a poison and an antidote from the same locus; the poison is trans-acting and forms toxic aggregates in all spores within an ascus, wherease the antidote is spore-specific and targets aggregates for degradation by the vacuole (By similarity). Meiotic drive by wtf systems therefore lead to poisoning of all progeny that do not inherit the dual poison/antidote allele, or express a compatible antidote (By similarity).</text>
</comment>
<comment type="subunit">
    <text evidence="1 3">Homomer (By similarity). Interacts with other proteins that exhibit high sequence similarity (By similarity).</text>
</comment>
<comment type="subcellular location">
    <subcellularLocation>
        <location evidence="1 4">Spore membrane</location>
        <topology evidence="4">Multi-pass membrane protein</topology>
    </subcellularLocation>
    <subcellularLocation>
        <location evidence="1 4">Vacuole membrane</location>
        <topology evidence="4">Multi-pass membrane protein</topology>
    </subcellularLocation>
</comment>
<comment type="developmental stage">
    <text evidence="6">Progressively increases throughout meiosis (at protein level).</text>
</comment>
<comment type="similarity">
    <text evidence="7">Belongs to the WTF family.</text>
</comment>